<feature type="chain" id="PRO_1000068268" description="Peptide methionine sulfoxide reductase MsrB">
    <location>
        <begin position="1"/>
        <end position="132"/>
    </location>
</feature>
<feature type="domain" description="MsrB" evidence="2">
    <location>
        <begin position="8"/>
        <end position="130"/>
    </location>
</feature>
<feature type="active site" description="Nucleophile" evidence="2">
    <location>
        <position position="119"/>
    </location>
</feature>
<feature type="binding site" evidence="2">
    <location>
        <position position="47"/>
    </location>
    <ligand>
        <name>Zn(2+)</name>
        <dbReference type="ChEBI" id="CHEBI:29105"/>
    </ligand>
</feature>
<feature type="binding site" evidence="2">
    <location>
        <position position="50"/>
    </location>
    <ligand>
        <name>Zn(2+)</name>
        <dbReference type="ChEBI" id="CHEBI:29105"/>
    </ligand>
</feature>
<feature type="binding site" evidence="2">
    <location>
        <position position="96"/>
    </location>
    <ligand>
        <name>Zn(2+)</name>
        <dbReference type="ChEBI" id="CHEBI:29105"/>
    </ligand>
</feature>
<feature type="binding site" evidence="2">
    <location>
        <position position="99"/>
    </location>
    <ligand>
        <name>Zn(2+)</name>
        <dbReference type="ChEBI" id="CHEBI:29105"/>
    </ligand>
</feature>
<dbReference type="EC" id="1.8.4.12" evidence="1"/>
<dbReference type="EMBL" id="CP000089">
    <property type="protein sequence ID" value="AAZ46635.1"/>
    <property type="molecule type" value="Genomic_DNA"/>
</dbReference>
<dbReference type="SMR" id="Q47EU6"/>
<dbReference type="STRING" id="159087.Daro_1889"/>
<dbReference type="KEGG" id="dar:Daro_1889"/>
<dbReference type="eggNOG" id="COG0229">
    <property type="taxonomic scope" value="Bacteria"/>
</dbReference>
<dbReference type="HOGENOM" id="CLU_031040_8_5_4"/>
<dbReference type="OrthoDB" id="4174719at2"/>
<dbReference type="GO" id="GO:0005737">
    <property type="term" value="C:cytoplasm"/>
    <property type="evidence" value="ECO:0007669"/>
    <property type="project" value="TreeGrafter"/>
</dbReference>
<dbReference type="GO" id="GO:0033743">
    <property type="term" value="F:peptide-methionine (R)-S-oxide reductase activity"/>
    <property type="evidence" value="ECO:0007669"/>
    <property type="project" value="UniProtKB-UniRule"/>
</dbReference>
<dbReference type="GO" id="GO:0008270">
    <property type="term" value="F:zinc ion binding"/>
    <property type="evidence" value="ECO:0007669"/>
    <property type="project" value="UniProtKB-UniRule"/>
</dbReference>
<dbReference type="GO" id="GO:0030091">
    <property type="term" value="P:protein repair"/>
    <property type="evidence" value="ECO:0007669"/>
    <property type="project" value="InterPro"/>
</dbReference>
<dbReference type="GO" id="GO:0006979">
    <property type="term" value="P:response to oxidative stress"/>
    <property type="evidence" value="ECO:0007669"/>
    <property type="project" value="InterPro"/>
</dbReference>
<dbReference type="FunFam" id="2.170.150.20:FF:000001">
    <property type="entry name" value="Peptide methionine sulfoxide reductase MsrB"/>
    <property type="match status" value="1"/>
</dbReference>
<dbReference type="Gene3D" id="2.170.150.20">
    <property type="entry name" value="Peptide methionine sulfoxide reductase"/>
    <property type="match status" value="1"/>
</dbReference>
<dbReference type="HAMAP" id="MF_01400">
    <property type="entry name" value="MsrB"/>
    <property type="match status" value="1"/>
</dbReference>
<dbReference type="InterPro" id="IPR028427">
    <property type="entry name" value="Met_Sox_Rdtase_MsrB"/>
</dbReference>
<dbReference type="InterPro" id="IPR002579">
    <property type="entry name" value="Met_Sox_Rdtase_MsrB_dom"/>
</dbReference>
<dbReference type="InterPro" id="IPR011057">
    <property type="entry name" value="Mss4-like_sf"/>
</dbReference>
<dbReference type="NCBIfam" id="TIGR00357">
    <property type="entry name" value="peptide-methionine (R)-S-oxide reductase MsrB"/>
    <property type="match status" value="1"/>
</dbReference>
<dbReference type="PANTHER" id="PTHR10173">
    <property type="entry name" value="METHIONINE SULFOXIDE REDUCTASE"/>
    <property type="match status" value="1"/>
</dbReference>
<dbReference type="PANTHER" id="PTHR10173:SF52">
    <property type="entry name" value="METHIONINE-R-SULFOXIDE REDUCTASE B1"/>
    <property type="match status" value="1"/>
</dbReference>
<dbReference type="Pfam" id="PF01641">
    <property type="entry name" value="SelR"/>
    <property type="match status" value="1"/>
</dbReference>
<dbReference type="SUPFAM" id="SSF51316">
    <property type="entry name" value="Mss4-like"/>
    <property type="match status" value="1"/>
</dbReference>
<dbReference type="PROSITE" id="PS51790">
    <property type="entry name" value="MSRB"/>
    <property type="match status" value="1"/>
</dbReference>
<keyword id="KW-0479">Metal-binding</keyword>
<keyword id="KW-0560">Oxidoreductase</keyword>
<keyword id="KW-0862">Zinc</keyword>
<protein>
    <recommendedName>
        <fullName evidence="1">Peptide methionine sulfoxide reductase MsrB</fullName>
        <ecNumber evidence="1">1.8.4.12</ecNumber>
    </recommendedName>
    <alternativeName>
        <fullName evidence="1">Peptide-methionine (R)-S-oxide reductase</fullName>
    </alternativeName>
</protein>
<organism>
    <name type="scientific">Dechloromonas aromatica (strain RCB)</name>
    <dbReference type="NCBI Taxonomy" id="159087"/>
    <lineage>
        <taxon>Bacteria</taxon>
        <taxon>Pseudomonadati</taxon>
        <taxon>Pseudomonadota</taxon>
        <taxon>Betaproteobacteria</taxon>
        <taxon>Rhodocyclales</taxon>
        <taxon>Azonexaceae</taxon>
        <taxon>Dechloromonas</taxon>
    </lineage>
</organism>
<sequence>MPKIEKTDAEWRAQLDENEYRVTRQKGTERAFTGKYWDTHDDGTYRCICCGAPLFRSETKFDSGCGWPSFHTPNDEKLIDEHVDQSFGMIRTEVTCHDCGAHLGHVFDDGPAPTGLRYCINSASLKLEKDGK</sequence>
<evidence type="ECO:0000255" key="1">
    <source>
        <dbReference type="HAMAP-Rule" id="MF_01400"/>
    </source>
</evidence>
<evidence type="ECO:0000255" key="2">
    <source>
        <dbReference type="PROSITE-ProRule" id="PRU01126"/>
    </source>
</evidence>
<gene>
    <name evidence="1" type="primary">msrB</name>
    <name type="ordered locus">Daro_1889</name>
</gene>
<name>MSRB_DECAR</name>
<comment type="catalytic activity">
    <reaction evidence="1">
        <text>L-methionyl-[protein] + [thioredoxin]-disulfide + H2O = L-methionyl-(R)-S-oxide-[protein] + [thioredoxin]-dithiol</text>
        <dbReference type="Rhea" id="RHEA:24164"/>
        <dbReference type="Rhea" id="RHEA-COMP:10698"/>
        <dbReference type="Rhea" id="RHEA-COMP:10700"/>
        <dbReference type="Rhea" id="RHEA-COMP:12313"/>
        <dbReference type="Rhea" id="RHEA-COMP:12314"/>
        <dbReference type="ChEBI" id="CHEBI:15377"/>
        <dbReference type="ChEBI" id="CHEBI:16044"/>
        <dbReference type="ChEBI" id="CHEBI:29950"/>
        <dbReference type="ChEBI" id="CHEBI:45764"/>
        <dbReference type="ChEBI" id="CHEBI:50058"/>
        <dbReference type="EC" id="1.8.4.12"/>
    </reaction>
</comment>
<comment type="cofactor">
    <cofactor evidence="1">
        <name>Zn(2+)</name>
        <dbReference type="ChEBI" id="CHEBI:29105"/>
    </cofactor>
    <text evidence="1">Binds 1 zinc ion per subunit. The zinc ion is important for the structural integrity of the protein.</text>
</comment>
<comment type="similarity">
    <text evidence="1">Belongs to the MsrB Met sulfoxide reductase family.</text>
</comment>
<reference key="1">
    <citation type="journal article" date="2009" name="BMC Genomics">
        <title>Metabolic analysis of the soil microbe Dechloromonas aromatica str. RCB: indications of a surprisingly complex life-style and cryptic anaerobic pathways for aromatic degradation.</title>
        <authorList>
            <person name="Salinero K.K."/>
            <person name="Keller K."/>
            <person name="Feil W.S."/>
            <person name="Feil H."/>
            <person name="Trong S."/>
            <person name="Di Bartolo G."/>
            <person name="Lapidus A."/>
        </authorList>
    </citation>
    <scope>NUCLEOTIDE SEQUENCE [LARGE SCALE GENOMIC DNA]</scope>
    <source>
        <strain>RCB</strain>
    </source>
</reference>
<accession>Q47EU6</accession>
<proteinExistence type="inferred from homology"/>